<organism>
    <name type="scientific">Schizosaccharomyces pombe (strain 972 / ATCC 24843)</name>
    <name type="common">Fission yeast</name>
    <dbReference type="NCBI Taxonomy" id="284812"/>
    <lineage>
        <taxon>Eukaryota</taxon>
        <taxon>Fungi</taxon>
        <taxon>Dikarya</taxon>
        <taxon>Ascomycota</taxon>
        <taxon>Taphrinomycotina</taxon>
        <taxon>Schizosaccharomycetes</taxon>
        <taxon>Schizosaccharomycetales</taxon>
        <taxon>Schizosaccharomycetaceae</taxon>
        <taxon>Schizosaccharomyces</taxon>
    </lineage>
</organism>
<evidence type="ECO:0000250" key="1"/>
<evidence type="ECO:0000250" key="2">
    <source>
        <dbReference type="UniProtKB" id="Q08975"/>
    </source>
</evidence>
<evidence type="ECO:0000269" key="3">
    <source>
    </source>
</evidence>
<evidence type="ECO:0000305" key="4"/>
<name>YJK5_SCHPO</name>
<protein>
    <recommendedName>
        <fullName>Putative hydroxymethylpyrimidine/phosphomethylpyrimidine kinase C18B5.05c</fullName>
        <ecNumber evidence="4">2.7.1.49</ecNumber>
        <ecNumber evidence="4">2.7.4.7</ecNumber>
    </recommendedName>
    <alternativeName>
        <fullName>Hydroxymethylpyrimidine kinase</fullName>
        <shortName>HMP kinase</shortName>
    </alternativeName>
    <alternativeName>
        <fullName>Hydroxymethylpyrimidine phosphate kinase</fullName>
        <shortName>HMP-P kinase</shortName>
        <shortName>HMP-phosphate kinase</shortName>
        <shortName>HMPP kinase</shortName>
    </alternativeName>
</protein>
<sequence length="327" mass="35840">MEANQSHNAKTNHPTCLTIAGSDCSGAAGIQADLKVMTAHQVYGMSVLTALTCQNSHGITGIYPLHPSLIQRQIDACLSDIQCRVVKIGMLPDPKSIPVISQALTKYKITDVVMDSVIISSMGNVMCETPTIPATIQHLFPHLLVYASNVMEAFILVEKTLKKSPPPLKSFPDIQNLMSIIHRLGPKFVVLRGHHVAFDKNMMITEKPDSKSWTADLIYDGKEFYIFEKPYNTTKSIHGESCSLTAAIASNLACNIPPLQAIHEALYSIEWAIQRVHKKSSDPYKSAQLFTALGHSSKFSGSLISLKSENYIPQADLTSVLLSHIPS</sequence>
<feature type="chain" id="PRO_0000343140" description="Putative hydroxymethylpyrimidine/phosphomethylpyrimidine kinase C18B5.05c">
    <location>
        <begin position="1"/>
        <end position="327"/>
    </location>
</feature>
<feature type="binding site" evidence="1">
    <location>
        <position position="54"/>
    </location>
    <ligand>
        <name>4-amino-5-hydroxymethyl-2-methylpyrimidine</name>
        <dbReference type="ChEBI" id="CHEBI:16892"/>
    </ligand>
</feature>
<proteinExistence type="inferred from homology"/>
<dbReference type="EC" id="2.7.1.49" evidence="4"/>
<dbReference type="EC" id="2.7.4.7" evidence="4"/>
<dbReference type="EMBL" id="CU329672">
    <property type="protein sequence ID" value="CAB52152.1"/>
    <property type="molecule type" value="Genomic_DNA"/>
</dbReference>
<dbReference type="PIR" id="T41198">
    <property type="entry name" value="T41198"/>
</dbReference>
<dbReference type="RefSeq" id="NP_587935.1">
    <property type="nucleotide sequence ID" value="NM_001022926.2"/>
</dbReference>
<dbReference type="SMR" id="Q9USL6"/>
<dbReference type="BioGRID" id="275587">
    <property type="interactions" value="30"/>
</dbReference>
<dbReference type="FunCoup" id="Q9USL6">
    <property type="interactions" value="483"/>
</dbReference>
<dbReference type="STRING" id="284812.Q9USL6"/>
<dbReference type="iPTMnet" id="Q9USL6"/>
<dbReference type="PaxDb" id="4896-SPCC18B5.05c.1"/>
<dbReference type="EnsemblFungi" id="SPCC18B5.05c.1">
    <property type="protein sequence ID" value="SPCC18B5.05c.1:pep"/>
    <property type="gene ID" value="SPCC18B5.05c"/>
</dbReference>
<dbReference type="KEGG" id="spo:2539014"/>
<dbReference type="PomBase" id="SPCC18B5.05c"/>
<dbReference type="VEuPathDB" id="FungiDB:SPCC18B5.05c"/>
<dbReference type="eggNOG" id="KOG2598">
    <property type="taxonomic scope" value="Eukaryota"/>
</dbReference>
<dbReference type="HOGENOM" id="CLU_020520_0_0_1"/>
<dbReference type="InParanoid" id="Q9USL6"/>
<dbReference type="OMA" id="NRHTHGT"/>
<dbReference type="PhylomeDB" id="Q9USL6"/>
<dbReference type="UniPathway" id="UPA00060">
    <property type="reaction ID" value="UER00137"/>
</dbReference>
<dbReference type="UniPathway" id="UPA00060">
    <property type="reaction ID" value="UER00138"/>
</dbReference>
<dbReference type="PRO" id="PR:Q9USL6"/>
<dbReference type="Proteomes" id="UP000002485">
    <property type="component" value="Chromosome III"/>
</dbReference>
<dbReference type="GO" id="GO:0005829">
    <property type="term" value="C:cytosol"/>
    <property type="evidence" value="ECO:0007005"/>
    <property type="project" value="PomBase"/>
</dbReference>
<dbReference type="GO" id="GO:0005634">
    <property type="term" value="C:nucleus"/>
    <property type="evidence" value="ECO:0007005"/>
    <property type="project" value="PomBase"/>
</dbReference>
<dbReference type="GO" id="GO:0005524">
    <property type="term" value="F:ATP binding"/>
    <property type="evidence" value="ECO:0007669"/>
    <property type="project" value="UniProtKB-KW"/>
</dbReference>
<dbReference type="GO" id="GO:0008902">
    <property type="term" value="F:hydroxymethylpyrimidine kinase activity"/>
    <property type="evidence" value="ECO:0000318"/>
    <property type="project" value="GO_Central"/>
</dbReference>
<dbReference type="GO" id="GO:0008972">
    <property type="term" value="F:phosphomethylpyrimidine kinase activity"/>
    <property type="evidence" value="ECO:0000318"/>
    <property type="project" value="GO_Central"/>
</dbReference>
<dbReference type="GO" id="GO:0009228">
    <property type="term" value="P:thiamine biosynthetic process"/>
    <property type="evidence" value="ECO:0000318"/>
    <property type="project" value="GO_Central"/>
</dbReference>
<dbReference type="GO" id="GO:0009229">
    <property type="term" value="P:thiamine diphosphate biosynthetic process"/>
    <property type="evidence" value="ECO:0007669"/>
    <property type="project" value="UniProtKB-UniPathway"/>
</dbReference>
<dbReference type="CDD" id="cd01169">
    <property type="entry name" value="HMPP_kinase"/>
    <property type="match status" value="1"/>
</dbReference>
<dbReference type="FunFam" id="3.40.1190.20:FF:000049">
    <property type="entry name" value="Phosphomethylpyrimidine kinase"/>
    <property type="match status" value="1"/>
</dbReference>
<dbReference type="Gene3D" id="3.40.1190.20">
    <property type="match status" value="1"/>
</dbReference>
<dbReference type="InterPro" id="IPR004399">
    <property type="entry name" value="HMP/HMP-P_kinase_dom"/>
</dbReference>
<dbReference type="InterPro" id="IPR013749">
    <property type="entry name" value="PM/HMP-P_kinase-1"/>
</dbReference>
<dbReference type="InterPro" id="IPR029056">
    <property type="entry name" value="Ribokinase-like"/>
</dbReference>
<dbReference type="PANTHER" id="PTHR20858:SF20">
    <property type="entry name" value="HYDROXYMETHYLPYRIMIDINE_PHOSPHOMETHYLPYRIMIDINE KINASE C18B5.05C-RELATED"/>
    <property type="match status" value="1"/>
</dbReference>
<dbReference type="PANTHER" id="PTHR20858">
    <property type="entry name" value="PHOSPHOMETHYLPYRIMIDINE KINASE"/>
    <property type="match status" value="1"/>
</dbReference>
<dbReference type="Pfam" id="PF08543">
    <property type="entry name" value="Phos_pyr_kin"/>
    <property type="match status" value="1"/>
</dbReference>
<dbReference type="SUPFAM" id="SSF53613">
    <property type="entry name" value="Ribokinase-like"/>
    <property type="match status" value="1"/>
</dbReference>
<reference key="1">
    <citation type="journal article" date="2002" name="Nature">
        <title>The genome sequence of Schizosaccharomyces pombe.</title>
        <authorList>
            <person name="Wood V."/>
            <person name="Gwilliam R."/>
            <person name="Rajandream M.A."/>
            <person name="Lyne M.H."/>
            <person name="Lyne R."/>
            <person name="Stewart A."/>
            <person name="Sgouros J.G."/>
            <person name="Peat N."/>
            <person name="Hayles J."/>
            <person name="Baker S.G."/>
            <person name="Basham D."/>
            <person name="Bowman S."/>
            <person name="Brooks K."/>
            <person name="Brown D."/>
            <person name="Brown S."/>
            <person name="Chillingworth T."/>
            <person name="Churcher C.M."/>
            <person name="Collins M."/>
            <person name="Connor R."/>
            <person name="Cronin A."/>
            <person name="Davis P."/>
            <person name="Feltwell T."/>
            <person name="Fraser A."/>
            <person name="Gentles S."/>
            <person name="Goble A."/>
            <person name="Hamlin N."/>
            <person name="Harris D.E."/>
            <person name="Hidalgo J."/>
            <person name="Hodgson G."/>
            <person name="Holroyd S."/>
            <person name="Hornsby T."/>
            <person name="Howarth S."/>
            <person name="Huckle E.J."/>
            <person name="Hunt S."/>
            <person name="Jagels K."/>
            <person name="James K.D."/>
            <person name="Jones L."/>
            <person name="Jones M."/>
            <person name="Leather S."/>
            <person name="McDonald S."/>
            <person name="McLean J."/>
            <person name="Mooney P."/>
            <person name="Moule S."/>
            <person name="Mungall K.L."/>
            <person name="Murphy L.D."/>
            <person name="Niblett D."/>
            <person name="Odell C."/>
            <person name="Oliver K."/>
            <person name="O'Neil S."/>
            <person name="Pearson D."/>
            <person name="Quail M.A."/>
            <person name="Rabbinowitsch E."/>
            <person name="Rutherford K.M."/>
            <person name="Rutter S."/>
            <person name="Saunders D."/>
            <person name="Seeger K."/>
            <person name="Sharp S."/>
            <person name="Skelton J."/>
            <person name="Simmonds M.N."/>
            <person name="Squares R."/>
            <person name="Squares S."/>
            <person name="Stevens K."/>
            <person name="Taylor K."/>
            <person name="Taylor R.G."/>
            <person name="Tivey A."/>
            <person name="Walsh S.V."/>
            <person name="Warren T."/>
            <person name="Whitehead S."/>
            <person name="Woodward J.R."/>
            <person name="Volckaert G."/>
            <person name="Aert R."/>
            <person name="Robben J."/>
            <person name="Grymonprez B."/>
            <person name="Weltjens I."/>
            <person name="Vanstreels E."/>
            <person name="Rieger M."/>
            <person name="Schaefer M."/>
            <person name="Mueller-Auer S."/>
            <person name="Gabel C."/>
            <person name="Fuchs M."/>
            <person name="Duesterhoeft A."/>
            <person name="Fritzc C."/>
            <person name="Holzer E."/>
            <person name="Moestl D."/>
            <person name="Hilbert H."/>
            <person name="Borzym K."/>
            <person name="Langer I."/>
            <person name="Beck A."/>
            <person name="Lehrach H."/>
            <person name="Reinhardt R."/>
            <person name="Pohl T.M."/>
            <person name="Eger P."/>
            <person name="Zimmermann W."/>
            <person name="Wedler H."/>
            <person name="Wambutt R."/>
            <person name="Purnelle B."/>
            <person name="Goffeau A."/>
            <person name="Cadieu E."/>
            <person name="Dreano S."/>
            <person name="Gloux S."/>
            <person name="Lelaure V."/>
            <person name="Mottier S."/>
            <person name="Galibert F."/>
            <person name="Aves S.J."/>
            <person name="Xiang Z."/>
            <person name="Hunt C."/>
            <person name="Moore K."/>
            <person name="Hurst S.M."/>
            <person name="Lucas M."/>
            <person name="Rochet M."/>
            <person name="Gaillardin C."/>
            <person name="Tallada V.A."/>
            <person name="Garzon A."/>
            <person name="Thode G."/>
            <person name="Daga R.R."/>
            <person name="Cruzado L."/>
            <person name="Jimenez J."/>
            <person name="Sanchez M."/>
            <person name="del Rey F."/>
            <person name="Benito J."/>
            <person name="Dominguez A."/>
            <person name="Revuelta J.L."/>
            <person name="Moreno S."/>
            <person name="Armstrong J."/>
            <person name="Forsburg S.L."/>
            <person name="Cerutti L."/>
            <person name="Lowe T."/>
            <person name="McCombie W.R."/>
            <person name="Paulsen I."/>
            <person name="Potashkin J."/>
            <person name="Shpakovski G.V."/>
            <person name="Ussery D."/>
            <person name="Barrell B.G."/>
            <person name="Nurse P."/>
        </authorList>
    </citation>
    <scope>NUCLEOTIDE SEQUENCE [LARGE SCALE GENOMIC DNA]</scope>
    <source>
        <strain>972 / ATCC 24843</strain>
    </source>
</reference>
<reference key="2">
    <citation type="journal article" date="2006" name="Nat. Biotechnol.">
        <title>ORFeome cloning and global analysis of protein localization in the fission yeast Schizosaccharomyces pombe.</title>
        <authorList>
            <person name="Matsuyama A."/>
            <person name="Arai R."/>
            <person name="Yashiroda Y."/>
            <person name="Shirai A."/>
            <person name="Kamata A."/>
            <person name="Sekido S."/>
            <person name="Kobayashi Y."/>
            <person name="Hashimoto A."/>
            <person name="Hamamoto M."/>
            <person name="Hiraoka Y."/>
            <person name="Horinouchi S."/>
            <person name="Yoshida M."/>
        </authorList>
    </citation>
    <scope>SUBCELLULAR LOCATION [LARGE SCALE ANALYSIS]</scope>
</reference>
<comment type="function">
    <text evidence="2">Catalyzes the phosphorylation of hydroxymethylpyrimidine phosphate (HMP-P) to HMP-PP, and of HMP to HMP-P.</text>
</comment>
<comment type="catalytic activity">
    <reaction evidence="2">
        <text>4-amino-5-hydroxymethyl-2-methylpyrimidine + ATP = 4-amino-2-methyl-5-(phosphooxymethyl)pyrimidine + ADP + H(+)</text>
        <dbReference type="Rhea" id="RHEA:23096"/>
        <dbReference type="ChEBI" id="CHEBI:15378"/>
        <dbReference type="ChEBI" id="CHEBI:16892"/>
        <dbReference type="ChEBI" id="CHEBI:30616"/>
        <dbReference type="ChEBI" id="CHEBI:58354"/>
        <dbReference type="ChEBI" id="CHEBI:456216"/>
        <dbReference type="EC" id="2.7.1.49"/>
    </reaction>
</comment>
<comment type="catalytic activity">
    <reaction evidence="2">
        <text>4-amino-2-methyl-5-(phosphooxymethyl)pyrimidine + ATP = 4-amino-2-methyl-5-(diphosphooxymethyl)pyrimidine + ADP</text>
        <dbReference type="Rhea" id="RHEA:19893"/>
        <dbReference type="ChEBI" id="CHEBI:30616"/>
        <dbReference type="ChEBI" id="CHEBI:57841"/>
        <dbReference type="ChEBI" id="CHEBI:58354"/>
        <dbReference type="ChEBI" id="CHEBI:456216"/>
        <dbReference type="EC" id="2.7.4.7"/>
    </reaction>
</comment>
<comment type="pathway">
    <text>Cofactor biosynthesis; thiamine diphosphate biosynthesis; 4-amino-2-methyl-5-diphosphomethylpyrimidine from 5-amino-1-(5-phospho-D-ribosyl)imidazole: step 2/3.</text>
</comment>
<comment type="pathway">
    <text>Cofactor biosynthesis; thiamine diphosphate biosynthesis; 4-amino-2-methyl-5-diphosphomethylpyrimidine from 5-amino-1-(5-phospho-D-ribosyl)imidazole: step 3/3.</text>
</comment>
<comment type="subcellular location">
    <subcellularLocation>
        <location evidence="3">Cytoplasm</location>
    </subcellularLocation>
    <subcellularLocation>
        <location evidence="3">Nucleus</location>
    </subcellularLocation>
</comment>
<comment type="similarity">
    <text evidence="4">Belongs to the ThiD family.</text>
</comment>
<gene>
    <name type="ORF">SPCC18B5.05c</name>
</gene>
<keyword id="KW-0067">ATP-binding</keyword>
<keyword id="KW-0963">Cytoplasm</keyword>
<keyword id="KW-0418">Kinase</keyword>
<keyword id="KW-0547">Nucleotide-binding</keyword>
<keyword id="KW-0539">Nucleus</keyword>
<keyword id="KW-1185">Reference proteome</keyword>
<keyword id="KW-0784">Thiamine biosynthesis</keyword>
<keyword id="KW-0808">Transferase</keyword>
<accession>Q9USL6</accession>